<organism>
    <name type="scientific">Alkalilimnicola ehrlichii (strain ATCC BAA-1101 / DSM 17681 / MLHE-1)</name>
    <dbReference type="NCBI Taxonomy" id="187272"/>
    <lineage>
        <taxon>Bacteria</taxon>
        <taxon>Pseudomonadati</taxon>
        <taxon>Pseudomonadota</taxon>
        <taxon>Gammaproteobacteria</taxon>
        <taxon>Chromatiales</taxon>
        <taxon>Ectothiorhodospiraceae</taxon>
        <taxon>Alkalilimnicola</taxon>
    </lineage>
</organism>
<protein>
    <recommendedName>
        <fullName evidence="1">Histidine--tRNA ligase</fullName>
        <ecNumber evidence="1">6.1.1.21</ecNumber>
    </recommendedName>
    <alternativeName>
        <fullName evidence="1">Histidyl-tRNA synthetase</fullName>
        <shortName evidence="1">HisRS</shortName>
    </alternativeName>
</protein>
<name>SYH_ALKEH</name>
<reference key="1">
    <citation type="submission" date="2006-08" db="EMBL/GenBank/DDBJ databases">
        <title>Complete sequence of Alkalilimnicola ehrilichei MLHE-1.</title>
        <authorList>
            <person name="Copeland A."/>
            <person name="Lucas S."/>
            <person name="Lapidus A."/>
            <person name="Barry K."/>
            <person name="Detter J.C."/>
            <person name="Glavina del Rio T."/>
            <person name="Hammon N."/>
            <person name="Israni S."/>
            <person name="Dalin E."/>
            <person name="Tice H."/>
            <person name="Pitluck S."/>
            <person name="Sims D."/>
            <person name="Brettin T."/>
            <person name="Bruce D."/>
            <person name="Han C."/>
            <person name="Tapia R."/>
            <person name="Gilna P."/>
            <person name="Schmutz J."/>
            <person name="Larimer F."/>
            <person name="Land M."/>
            <person name="Hauser L."/>
            <person name="Kyrpides N."/>
            <person name="Mikhailova N."/>
            <person name="Oremland R.S."/>
            <person name="Hoeft S.E."/>
            <person name="Switzer-Blum J."/>
            <person name="Kulp T."/>
            <person name="King G."/>
            <person name="Tabita R."/>
            <person name="Witte B."/>
            <person name="Santini J.M."/>
            <person name="Basu P."/>
            <person name="Hollibaugh J.T."/>
            <person name="Xie G."/>
            <person name="Stolz J.F."/>
            <person name="Richardson P."/>
        </authorList>
    </citation>
    <scope>NUCLEOTIDE SEQUENCE [LARGE SCALE GENOMIC DNA]</scope>
    <source>
        <strain>ATCC BAA-1101 / DSM 17681 / MLHE-1</strain>
    </source>
</reference>
<feature type="chain" id="PRO_1000016308" description="Histidine--tRNA ligase">
    <location>
        <begin position="1"/>
        <end position="429"/>
    </location>
</feature>
<accession>Q0A986</accession>
<comment type="catalytic activity">
    <reaction evidence="1">
        <text>tRNA(His) + L-histidine + ATP = L-histidyl-tRNA(His) + AMP + diphosphate + H(+)</text>
        <dbReference type="Rhea" id="RHEA:17313"/>
        <dbReference type="Rhea" id="RHEA-COMP:9665"/>
        <dbReference type="Rhea" id="RHEA-COMP:9689"/>
        <dbReference type="ChEBI" id="CHEBI:15378"/>
        <dbReference type="ChEBI" id="CHEBI:30616"/>
        <dbReference type="ChEBI" id="CHEBI:33019"/>
        <dbReference type="ChEBI" id="CHEBI:57595"/>
        <dbReference type="ChEBI" id="CHEBI:78442"/>
        <dbReference type="ChEBI" id="CHEBI:78527"/>
        <dbReference type="ChEBI" id="CHEBI:456215"/>
        <dbReference type="EC" id="6.1.1.21"/>
    </reaction>
</comment>
<comment type="subunit">
    <text evidence="1">Homodimer.</text>
</comment>
<comment type="subcellular location">
    <subcellularLocation>
        <location evidence="1">Cytoplasm</location>
    </subcellularLocation>
</comment>
<comment type="similarity">
    <text evidence="1">Belongs to the class-II aminoacyl-tRNA synthetase family.</text>
</comment>
<keyword id="KW-0030">Aminoacyl-tRNA synthetase</keyword>
<keyword id="KW-0067">ATP-binding</keyword>
<keyword id="KW-0963">Cytoplasm</keyword>
<keyword id="KW-0436">Ligase</keyword>
<keyword id="KW-0547">Nucleotide-binding</keyword>
<keyword id="KW-0648">Protein biosynthesis</keyword>
<keyword id="KW-1185">Reference proteome</keyword>
<gene>
    <name evidence="1" type="primary">hisS</name>
    <name type="ordered locus">Mlg_1252</name>
</gene>
<dbReference type="EC" id="6.1.1.21" evidence="1"/>
<dbReference type="EMBL" id="CP000453">
    <property type="protein sequence ID" value="ABI56601.1"/>
    <property type="molecule type" value="Genomic_DNA"/>
</dbReference>
<dbReference type="RefSeq" id="WP_011628996.1">
    <property type="nucleotide sequence ID" value="NC_008340.1"/>
</dbReference>
<dbReference type="SMR" id="Q0A986"/>
<dbReference type="KEGG" id="aeh:Mlg_1252"/>
<dbReference type="eggNOG" id="COG0124">
    <property type="taxonomic scope" value="Bacteria"/>
</dbReference>
<dbReference type="HOGENOM" id="CLU_025113_1_1_6"/>
<dbReference type="OrthoDB" id="9800814at2"/>
<dbReference type="Proteomes" id="UP000001962">
    <property type="component" value="Chromosome"/>
</dbReference>
<dbReference type="GO" id="GO:0005737">
    <property type="term" value="C:cytoplasm"/>
    <property type="evidence" value="ECO:0007669"/>
    <property type="project" value="UniProtKB-SubCell"/>
</dbReference>
<dbReference type="GO" id="GO:0005524">
    <property type="term" value="F:ATP binding"/>
    <property type="evidence" value="ECO:0007669"/>
    <property type="project" value="UniProtKB-UniRule"/>
</dbReference>
<dbReference type="GO" id="GO:0004821">
    <property type="term" value="F:histidine-tRNA ligase activity"/>
    <property type="evidence" value="ECO:0007669"/>
    <property type="project" value="UniProtKB-UniRule"/>
</dbReference>
<dbReference type="GO" id="GO:0006427">
    <property type="term" value="P:histidyl-tRNA aminoacylation"/>
    <property type="evidence" value="ECO:0007669"/>
    <property type="project" value="UniProtKB-UniRule"/>
</dbReference>
<dbReference type="CDD" id="cd00773">
    <property type="entry name" value="HisRS-like_core"/>
    <property type="match status" value="1"/>
</dbReference>
<dbReference type="FunFam" id="3.30.930.10:FF:000005">
    <property type="entry name" value="Histidine--tRNA ligase"/>
    <property type="match status" value="1"/>
</dbReference>
<dbReference type="Gene3D" id="3.40.50.800">
    <property type="entry name" value="Anticodon-binding domain"/>
    <property type="match status" value="1"/>
</dbReference>
<dbReference type="Gene3D" id="3.30.930.10">
    <property type="entry name" value="Bira Bifunctional Protein, Domain 2"/>
    <property type="match status" value="1"/>
</dbReference>
<dbReference type="HAMAP" id="MF_00127">
    <property type="entry name" value="His_tRNA_synth"/>
    <property type="match status" value="1"/>
</dbReference>
<dbReference type="InterPro" id="IPR006195">
    <property type="entry name" value="aa-tRNA-synth_II"/>
</dbReference>
<dbReference type="InterPro" id="IPR045864">
    <property type="entry name" value="aa-tRNA-synth_II/BPL/LPL"/>
</dbReference>
<dbReference type="InterPro" id="IPR004154">
    <property type="entry name" value="Anticodon-bd"/>
</dbReference>
<dbReference type="InterPro" id="IPR036621">
    <property type="entry name" value="Anticodon-bd_dom_sf"/>
</dbReference>
<dbReference type="InterPro" id="IPR015807">
    <property type="entry name" value="His-tRNA-ligase"/>
</dbReference>
<dbReference type="InterPro" id="IPR041715">
    <property type="entry name" value="HisRS-like_core"/>
</dbReference>
<dbReference type="InterPro" id="IPR004516">
    <property type="entry name" value="HisRS/HisZ"/>
</dbReference>
<dbReference type="NCBIfam" id="TIGR00442">
    <property type="entry name" value="hisS"/>
    <property type="match status" value="1"/>
</dbReference>
<dbReference type="PANTHER" id="PTHR43707:SF1">
    <property type="entry name" value="HISTIDINE--TRNA LIGASE, MITOCHONDRIAL-RELATED"/>
    <property type="match status" value="1"/>
</dbReference>
<dbReference type="PANTHER" id="PTHR43707">
    <property type="entry name" value="HISTIDYL-TRNA SYNTHETASE"/>
    <property type="match status" value="1"/>
</dbReference>
<dbReference type="Pfam" id="PF03129">
    <property type="entry name" value="HGTP_anticodon"/>
    <property type="match status" value="1"/>
</dbReference>
<dbReference type="Pfam" id="PF13393">
    <property type="entry name" value="tRNA-synt_His"/>
    <property type="match status" value="1"/>
</dbReference>
<dbReference type="PIRSF" id="PIRSF001549">
    <property type="entry name" value="His-tRNA_synth"/>
    <property type="match status" value="1"/>
</dbReference>
<dbReference type="SUPFAM" id="SSF52954">
    <property type="entry name" value="Class II aaRS ABD-related"/>
    <property type="match status" value="1"/>
</dbReference>
<dbReference type="SUPFAM" id="SSF55681">
    <property type="entry name" value="Class II aaRS and biotin synthetases"/>
    <property type="match status" value="1"/>
</dbReference>
<dbReference type="PROSITE" id="PS50862">
    <property type="entry name" value="AA_TRNA_LIGASE_II"/>
    <property type="match status" value="1"/>
</dbReference>
<sequence length="429" mass="47922">MAKGIRSIRGFSDILPEQTPLWQFVESNIQATLEAYGYREIRLPIVEKTELFSRSIGEVTDIVEKEMYTFEDRNGDSLTLRPEGTAGCVRCGIQNGLFHGGQPRVWYAGPMFRHERPQKGRYRQFHQIGAEVYGESGPGVDAEMILMTARLLRCLGLEDVRLELNTLGTGEARAAHRAALVEYLQAHEDRLDDDARRRLHSNPLRILDTKNPDMQALVEQAPRLMDYLDEDSRSHFQAVCRVLDQAGVAYRVNPRLVRGLDYYSRTVFEWITDRLGAQGTVLAGGRYDTLVEQIGGKPTPAIGFALGLERLVSLLEESGISGPQSGPHAFVVSADSLRALPLVEGLRDRLPGLRLQMQTEGGSFRSQFKRADRSGAALALVLGEEELAEGRFGVKDLRGDAEQQRLDPEALSDYLARRWPELAATEVTD</sequence>
<evidence type="ECO:0000255" key="1">
    <source>
        <dbReference type="HAMAP-Rule" id="MF_00127"/>
    </source>
</evidence>
<proteinExistence type="inferred from homology"/>